<sequence length="434" mass="47636">MPLKSLKNRLNQHFDLSPRYGSVKKIMPNIVYADGFNPSVGDVVKIEKSDGSECVGMVVVAEKEQFGFTPFNFIEGARAGDKVLFLKEGLNFPVGRNLLGRVLNPLGQVIDNKGALDYERLAPVITTPIAPLKRGLIDEIFSVGVKSIDGLLTCGKGQKLGIFAGSGVGKSTLMGMITRGCLAPIKVIALIGERGREIPEFIEKNLKGDLSSCVLVVATSDDSPLMRKYGAFCAMSVAEYFKNQGLDVLFIMDSVTRFAMAQREIGLALGEPPTSKGYPPSALSLLPQLMERAGKEENKGSITAFFSVLVEGDDLSDPIADQTRSILDGHIVLSRELTDYGIYPPINILNSASRVAKDIISESQNLCARKFRRLYALLKENEMLIRIGSYQMGNDKELDEAIKKKALMEQFLAQDENALQPFETSFQQLEEILR</sequence>
<dbReference type="EC" id="7.1.2.2"/>
<dbReference type="EMBL" id="Y08620">
    <property type="protein sequence ID" value="CAA69911.1"/>
    <property type="molecule type" value="Genomic_DNA"/>
</dbReference>
<dbReference type="EMBL" id="AE000511">
    <property type="protein sequence ID" value="AAD08462.1"/>
    <property type="molecule type" value="Genomic_DNA"/>
</dbReference>
<dbReference type="PIR" id="D64697">
    <property type="entry name" value="D64697"/>
</dbReference>
<dbReference type="RefSeq" id="NP_208211.1">
    <property type="nucleotide sequence ID" value="NC_000915.1"/>
</dbReference>
<dbReference type="RefSeq" id="WP_001128709.1">
    <property type="nucleotide sequence ID" value="NC_018939.1"/>
</dbReference>
<dbReference type="SMR" id="O07025"/>
<dbReference type="DIP" id="DIP-3391N"/>
<dbReference type="FunCoup" id="O07025">
    <property type="interactions" value="91"/>
</dbReference>
<dbReference type="IntAct" id="O07025">
    <property type="interactions" value="1"/>
</dbReference>
<dbReference type="MINT" id="O07025"/>
<dbReference type="STRING" id="85962.HP_1420"/>
<dbReference type="PaxDb" id="85962-C694_07345"/>
<dbReference type="EnsemblBacteria" id="AAD08462">
    <property type="protein sequence ID" value="AAD08462"/>
    <property type="gene ID" value="HP_1420"/>
</dbReference>
<dbReference type="KEGG" id="heo:C694_07345"/>
<dbReference type="KEGG" id="hpy:HP_1420"/>
<dbReference type="PATRIC" id="fig|85962.47.peg.1524"/>
<dbReference type="eggNOG" id="COG1157">
    <property type="taxonomic scope" value="Bacteria"/>
</dbReference>
<dbReference type="InParanoid" id="O07025"/>
<dbReference type="OrthoDB" id="9801639at2"/>
<dbReference type="PhylomeDB" id="O07025"/>
<dbReference type="Proteomes" id="UP000000429">
    <property type="component" value="Chromosome"/>
</dbReference>
<dbReference type="GO" id="GO:0005737">
    <property type="term" value="C:cytoplasm"/>
    <property type="evidence" value="ECO:0007669"/>
    <property type="project" value="UniProtKB-SubCell"/>
</dbReference>
<dbReference type="GO" id="GO:0030257">
    <property type="term" value="C:type III protein secretion system complex"/>
    <property type="evidence" value="ECO:0007669"/>
    <property type="project" value="InterPro"/>
</dbReference>
<dbReference type="GO" id="GO:0005524">
    <property type="term" value="F:ATP binding"/>
    <property type="evidence" value="ECO:0007669"/>
    <property type="project" value="UniProtKB-KW"/>
</dbReference>
<dbReference type="GO" id="GO:0016887">
    <property type="term" value="F:ATP hydrolysis activity"/>
    <property type="evidence" value="ECO:0007669"/>
    <property type="project" value="InterPro"/>
</dbReference>
<dbReference type="GO" id="GO:0044781">
    <property type="term" value="P:bacterial-type flagellum organization"/>
    <property type="evidence" value="ECO:0007669"/>
    <property type="project" value="UniProtKB-KW"/>
</dbReference>
<dbReference type="GO" id="GO:0030254">
    <property type="term" value="P:protein secretion by the type III secretion system"/>
    <property type="evidence" value="ECO:0007669"/>
    <property type="project" value="InterPro"/>
</dbReference>
<dbReference type="GO" id="GO:0015986">
    <property type="term" value="P:proton motive force-driven ATP synthesis"/>
    <property type="evidence" value="ECO:0007669"/>
    <property type="project" value="GOC"/>
</dbReference>
<dbReference type="GO" id="GO:1902600">
    <property type="term" value="P:proton transmembrane transport"/>
    <property type="evidence" value="ECO:0007669"/>
    <property type="project" value="UniProtKB-KW"/>
</dbReference>
<dbReference type="CDD" id="cd18114">
    <property type="entry name" value="ATP-synt_flagellum-secretory_path_III_C"/>
    <property type="match status" value="1"/>
</dbReference>
<dbReference type="CDD" id="cd01136">
    <property type="entry name" value="ATPase_flagellum-secretory_path_III"/>
    <property type="match status" value="1"/>
</dbReference>
<dbReference type="FunFam" id="3.40.50.12240:FF:000002">
    <property type="entry name" value="Flagellum-specific ATP synthase FliI"/>
    <property type="match status" value="1"/>
</dbReference>
<dbReference type="Gene3D" id="3.40.50.12240">
    <property type="match status" value="1"/>
</dbReference>
<dbReference type="InterPro" id="IPR003593">
    <property type="entry name" value="AAA+_ATPase"/>
</dbReference>
<dbReference type="InterPro" id="IPR020003">
    <property type="entry name" value="ATPase_a/bsu_AS"/>
</dbReference>
<dbReference type="InterPro" id="IPR050053">
    <property type="entry name" value="ATPase_alpha/beta_chains"/>
</dbReference>
<dbReference type="InterPro" id="IPR000194">
    <property type="entry name" value="ATPase_F1/V1/A1_a/bsu_nucl-bd"/>
</dbReference>
<dbReference type="InterPro" id="IPR005714">
    <property type="entry name" value="ATPase_T3SS_FliI/YscN"/>
</dbReference>
<dbReference type="InterPro" id="IPR027417">
    <property type="entry name" value="P-loop_NTPase"/>
</dbReference>
<dbReference type="InterPro" id="IPR040627">
    <property type="entry name" value="T3SS_ATPase_C"/>
</dbReference>
<dbReference type="NCBIfam" id="TIGR01026">
    <property type="entry name" value="fliI_yscN"/>
    <property type="match status" value="1"/>
</dbReference>
<dbReference type="NCBIfam" id="NF006290">
    <property type="entry name" value="PRK08472.1"/>
    <property type="match status" value="1"/>
</dbReference>
<dbReference type="PANTHER" id="PTHR15184">
    <property type="entry name" value="ATP SYNTHASE"/>
    <property type="match status" value="1"/>
</dbReference>
<dbReference type="PANTHER" id="PTHR15184:SF9">
    <property type="entry name" value="SPI-1 TYPE 3 SECRETION SYSTEM ATPASE"/>
    <property type="match status" value="1"/>
</dbReference>
<dbReference type="Pfam" id="PF00006">
    <property type="entry name" value="ATP-synt_ab"/>
    <property type="match status" value="1"/>
</dbReference>
<dbReference type="Pfam" id="PF18269">
    <property type="entry name" value="T3SS_ATPase_C"/>
    <property type="match status" value="1"/>
</dbReference>
<dbReference type="SMART" id="SM00382">
    <property type="entry name" value="AAA"/>
    <property type="match status" value="1"/>
</dbReference>
<dbReference type="SUPFAM" id="SSF52540">
    <property type="entry name" value="P-loop containing nucleoside triphosphate hydrolases"/>
    <property type="match status" value="1"/>
</dbReference>
<dbReference type="PROSITE" id="PS00152">
    <property type="entry name" value="ATPASE_ALPHA_BETA"/>
    <property type="match status" value="1"/>
</dbReference>
<accession>O07025</accession>
<accession>P94822</accession>
<keyword id="KW-0066">ATP synthesis</keyword>
<keyword id="KW-0067">ATP-binding</keyword>
<keyword id="KW-1005">Bacterial flagellum biogenesis</keyword>
<keyword id="KW-1006">Bacterial flagellum protein export</keyword>
<keyword id="KW-0963">Cytoplasm</keyword>
<keyword id="KW-0375">Hydrogen ion transport</keyword>
<keyword id="KW-0406">Ion transport</keyword>
<keyword id="KW-0547">Nucleotide-binding</keyword>
<keyword id="KW-0653">Protein transport</keyword>
<keyword id="KW-1185">Reference proteome</keyword>
<keyword id="KW-1278">Translocase</keyword>
<keyword id="KW-0813">Transport</keyword>
<evidence type="ECO:0000255" key="1"/>
<evidence type="ECO:0000255" key="2">
    <source>
        <dbReference type="PROSITE-ProRule" id="PRU10106"/>
    </source>
</evidence>
<evidence type="ECO:0000305" key="3"/>
<protein>
    <recommendedName>
        <fullName>Flagellum-specific ATP synthase</fullName>
        <ecNumber>7.1.2.2</ecNumber>
    </recommendedName>
</protein>
<organism>
    <name type="scientific">Helicobacter pylori (strain ATCC 700392 / 26695)</name>
    <name type="common">Campylobacter pylori</name>
    <dbReference type="NCBI Taxonomy" id="85962"/>
    <lineage>
        <taxon>Bacteria</taxon>
        <taxon>Pseudomonadati</taxon>
        <taxon>Campylobacterota</taxon>
        <taxon>Epsilonproteobacteria</taxon>
        <taxon>Campylobacterales</taxon>
        <taxon>Helicobacteraceae</taxon>
        <taxon>Helicobacter</taxon>
    </lineage>
</organism>
<feature type="chain" id="PRO_0000144696" description="Flagellum-specific ATP synthase">
    <location>
        <begin position="1"/>
        <end position="434"/>
    </location>
</feature>
<feature type="binding site" evidence="1">
    <location>
        <begin position="164"/>
        <end position="171"/>
    </location>
    <ligand>
        <name>ATP</name>
        <dbReference type="ChEBI" id="CHEBI:30616"/>
    </ligand>
</feature>
<feature type="sequence conflict" description="In Ref. 1; CAA69911." evidence="3" ref="1">
    <original>D</original>
    <variation>E</variation>
    <location>
        <position position="15"/>
    </location>
</feature>
<feature type="sequence conflict" description="In Ref. 1; CAA69911." evidence="3" ref="1">
    <original>A</original>
    <variation>V</variation>
    <location>
        <position position="115"/>
    </location>
</feature>
<feature type="sequence conflict" description="In Ref. 1; CAA69911." evidence="3" ref="1">
    <original>I</original>
    <variation>V</variation>
    <location>
        <position position="140"/>
    </location>
</feature>
<feature type="sequence conflict" description="In Ref. 1; CAA69911." evidence="3" ref="1">
    <original>T</original>
    <variation>A</variation>
    <location>
        <position position="323"/>
    </location>
</feature>
<feature type="sequence conflict" description="In Ref. 1; CAA69911." evidence="3" ref="1">
    <original>C</original>
    <variation>Y</variation>
    <location>
        <position position="367"/>
    </location>
</feature>
<feature type="sequence conflict" description="In Ref. 1; CAA69911." evidence="3" ref="1">
    <original>T</original>
    <variation>Q</variation>
    <location>
        <position position="424"/>
    </location>
</feature>
<comment type="function">
    <text>Probable catalytic subunit of a protein translocase for flagellum-specific export, or a proton translocase involved in local circuits at the flagellum.</text>
</comment>
<comment type="catalytic activity">
    <reaction evidence="2">
        <text>ATP + H2O + 4 H(+)(in) = ADP + phosphate + 5 H(+)(out)</text>
        <dbReference type="Rhea" id="RHEA:57720"/>
        <dbReference type="ChEBI" id="CHEBI:15377"/>
        <dbReference type="ChEBI" id="CHEBI:15378"/>
        <dbReference type="ChEBI" id="CHEBI:30616"/>
        <dbReference type="ChEBI" id="CHEBI:43474"/>
        <dbReference type="ChEBI" id="CHEBI:456216"/>
        <dbReference type="EC" id="7.1.2.2"/>
    </reaction>
</comment>
<comment type="interaction">
    <interactant intactId="EBI-957989">
        <id>O07025</id>
    </interactant>
    <interactant intactId="EBI-958087">
        <id>O25120</id>
        <label>HP_0353</label>
    </interactant>
    <organismsDiffer>false</organismsDiffer>
    <experiments>4</experiments>
</comment>
<comment type="subcellular location">
    <subcellularLocation>
        <location evidence="3">Cytoplasm</location>
    </subcellularLocation>
</comment>
<comment type="similarity">
    <text evidence="3">Belongs to the ATPase alpha/beta chains family.</text>
</comment>
<proteinExistence type="evidence at protein level"/>
<name>FLII_HELPY</name>
<reference key="1">
    <citation type="journal article" date="1997" name="FEMS Microbiol. Lett.">
        <title>A flagellar-specific ATPase (FliI) is necessary for flagellar export in Helicobacter pylori.</title>
        <authorList>
            <person name="Jenks P.J."/>
            <person name="Foynes S."/>
            <person name="Ward S."/>
            <person name="Wren B.W."/>
        </authorList>
    </citation>
    <scope>NUCLEOTIDE SEQUENCE [GENOMIC DNA]</scope>
    <source>
        <strain>N6</strain>
    </source>
</reference>
<reference key="2">
    <citation type="journal article" date="1997" name="Nature">
        <title>The complete genome sequence of the gastric pathogen Helicobacter pylori.</title>
        <authorList>
            <person name="Tomb J.-F."/>
            <person name="White O."/>
            <person name="Kerlavage A.R."/>
            <person name="Clayton R.A."/>
            <person name="Sutton G.G."/>
            <person name="Fleischmann R.D."/>
            <person name="Ketchum K.A."/>
            <person name="Klenk H.-P."/>
            <person name="Gill S.R."/>
            <person name="Dougherty B.A."/>
            <person name="Nelson K.E."/>
            <person name="Quackenbush J."/>
            <person name="Zhou L."/>
            <person name="Kirkness E.F."/>
            <person name="Peterson S.N."/>
            <person name="Loftus B.J."/>
            <person name="Richardson D.L."/>
            <person name="Dodson R.J."/>
            <person name="Khalak H.G."/>
            <person name="Glodek A."/>
            <person name="McKenney K."/>
            <person name="FitzGerald L.M."/>
            <person name="Lee N."/>
            <person name="Adams M.D."/>
            <person name="Hickey E.K."/>
            <person name="Berg D.E."/>
            <person name="Gocayne J.D."/>
            <person name="Utterback T.R."/>
            <person name="Peterson J.D."/>
            <person name="Kelley J.M."/>
            <person name="Cotton M.D."/>
            <person name="Weidman J.F."/>
            <person name="Fujii C."/>
            <person name="Bowman C."/>
            <person name="Watthey L."/>
            <person name="Wallin E."/>
            <person name="Hayes W.S."/>
            <person name="Borodovsky M."/>
            <person name="Karp P.D."/>
            <person name="Smith H.O."/>
            <person name="Fraser C.M."/>
            <person name="Venter J.C."/>
        </authorList>
    </citation>
    <scope>NUCLEOTIDE SEQUENCE [LARGE SCALE GENOMIC DNA]</scope>
    <source>
        <strain>ATCC 700392 / 26695</strain>
    </source>
</reference>
<gene>
    <name type="primary">fliI</name>
    <name type="ordered locus">HP_1420</name>
</gene>